<evidence type="ECO:0000255" key="1">
    <source>
        <dbReference type="HAMAP-Rule" id="MF_00101"/>
    </source>
</evidence>
<dbReference type="EC" id="2.7.8.7" evidence="1"/>
<dbReference type="EMBL" id="CP000381">
    <property type="protein sequence ID" value="ABX73836.1"/>
    <property type="molecule type" value="Genomic_DNA"/>
</dbReference>
<dbReference type="RefSeq" id="WP_002212541.1">
    <property type="nucleotide sequence ID" value="NC_010120.1"/>
</dbReference>
<dbReference type="SMR" id="A9M273"/>
<dbReference type="KEGG" id="nmn:NMCC_1692"/>
<dbReference type="HOGENOM" id="CLU_089696_3_1_4"/>
<dbReference type="Proteomes" id="UP000001177">
    <property type="component" value="Chromosome"/>
</dbReference>
<dbReference type="GO" id="GO:0005737">
    <property type="term" value="C:cytoplasm"/>
    <property type="evidence" value="ECO:0007669"/>
    <property type="project" value="UniProtKB-SubCell"/>
</dbReference>
<dbReference type="GO" id="GO:0008897">
    <property type="term" value="F:holo-[acyl-carrier-protein] synthase activity"/>
    <property type="evidence" value="ECO:0007669"/>
    <property type="project" value="UniProtKB-UniRule"/>
</dbReference>
<dbReference type="GO" id="GO:0000287">
    <property type="term" value="F:magnesium ion binding"/>
    <property type="evidence" value="ECO:0007669"/>
    <property type="project" value="UniProtKB-UniRule"/>
</dbReference>
<dbReference type="GO" id="GO:0006633">
    <property type="term" value="P:fatty acid biosynthetic process"/>
    <property type="evidence" value="ECO:0007669"/>
    <property type="project" value="UniProtKB-UniRule"/>
</dbReference>
<dbReference type="Gene3D" id="3.90.470.20">
    <property type="entry name" value="4'-phosphopantetheinyl transferase domain"/>
    <property type="match status" value="1"/>
</dbReference>
<dbReference type="HAMAP" id="MF_00101">
    <property type="entry name" value="AcpS"/>
    <property type="match status" value="1"/>
</dbReference>
<dbReference type="InterPro" id="IPR008278">
    <property type="entry name" value="4-PPantetheinyl_Trfase_dom"/>
</dbReference>
<dbReference type="InterPro" id="IPR037143">
    <property type="entry name" value="4-PPantetheinyl_Trfase_dom_sf"/>
</dbReference>
<dbReference type="InterPro" id="IPR002582">
    <property type="entry name" value="ACPS"/>
</dbReference>
<dbReference type="InterPro" id="IPR004568">
    <property type="entry name" value="Ppantetheine-prot_Trfase_dom"/>
</dbReference>
<dbReference type="NCBIfam" id="TIGR00516">
    <property type="entry name" value="acpS"/>
    <property type="match status" value="1"/>
</dbReference>
<dbReference type="NCBIfam" id="TIGR00556">
    <property type="entry name" value="pantethn_trn"/>
    <property type="match status" value="1"/>
</dbReference>
<dbReference type="Pfam" id="PF01648">
    <property type="entry name" value="ACPS"/>
    <property type="match status" value="1"/>
</dbReference>
<dbReference type="SUPFAM" id="SSF56214">
    <property type="entry name" value="4'-phosphopantetheinyl transferase"/>
    <property type="match status" value="1"/>
</dbReference>
<organism>
    <name type="scientific">Neisseria meningitidis serogroup C (strain 053442)</name>
    <dbReference type="NCBI Taxonomy" id="374833"/>
    <lineage>
        <taxon>Bacteria</taxon>
        <taxon>Pseudomonadati</taxon>
        <taxon>Pseudomonadota</taxon>
        <taxon>Betaproteobacteria</taxon>
        <taxon>Neisseriales</taxon>
        <taxon>Neisseriaceae</taxon>
        <taxon>Neisseria</taxon>
    </lineage>
</organism>
<comment type="function">
    <text evidence="1">Transfers the 4'-phosphopantetheine moiety from coenzyme A to a Ser of acyl-carrier-protein.</text>
</comment>
<comment type="catalytic activity">
    <reaction evidence="1">
        <text>apo-[ACP] + CoA = holo-[ACP] + adenosine 3',5'-bisphosphate + H(+)</text>
        <dbReference type="Rhea" id="RHEA:12068"/>
        <dbReference type="Rhea" id="RHEA-COMP:9685"/>
        <dbReference type="Rhea" id="RHEA-COMP:9690"/>
        <dbReference type="ChEBI" id="CHEBI:15378"/>
        <dbReference type="ChEBI" id="CHEBI:29999"/>
        <dbReference type="ChEBI" id="CHEBI:57287"/>
        <dbReference type="ChEBI" id="CHEBI:58343"/>
        <dbReference type="ChEBI" id="CHEBI:64479"/>
        <dbReference type="EC" id="2.7.8.7"/>
    </reaction>
</comment>
<comment type="cofactor">
    <cofactor evidence="1">
        <name>Mg(2+)</name>
        <dbReference type="ChEBI" id="CHEBI:18420"/>
    </cofactor>
</comment>
<comment type="subcellular location">
    <subcellularLocation>
        <location evidence="1">Cytoplasm</location>
    </subcellularLocation>
</comment>
<comment type="similarity">
    <text evidence="1">Belongs to the P-Pant transferase superfamily. AcpS family.</text>
</comment>
<accession>A9M273</accession>
<sequence length="125" mass="13677">MIYGIGTDIVSLKRIIRLNKKFGQAFAGRILTPEELLEFPQAGKPVNYLAKRFAAKEAFAKAVGTGIRGAVSFRNIGIGHDALGKPEFFYGPALSKWLEEQGISRVSLSMSDEEDTVLAFVVAEK</sequence>
<reference key="1">
    <citation type="journal article" date="2008" name="Genomics">
        <title>Characterization of ST-4821 complex, a unique Neisseria meningitidis clone.</title>
        <authorList>
            <person name="Peng J."/>
            <person name="Yang L."/>
            <person name="Yang F."/>
            <person name="Yang J."/>
            <person name="Yan Y."/>
            <person name="Nie H."/>
            <person name="Zhang X."/>
            <person name="Xiong Z."/>
            <person name="Jiang Y."/>
            <person name="Cheng F."/>
            <person name="Xu X."/>
            <person name="Chen S."/>
            <person name="Sun L."/>
            <person name="Li W."/>
            <person name="Shen Y."/>
            <person name="Shao Z."/>
            <person name="Liang X."/>
            <person name="Xu J."/>
            <person name="Jin Q."/>
        </authorList>
    </citation>
    <scope>NUCLEOTIDE SEQUENCE [LARGE SCALE GENOMIC DNA]</scope>
    <source>
        <strain>053442</strain>
    </source>
</reference>
<protein>
    <recommendedName>
        <fullName evidence="1">Holo-[acyl-carrier-protein] synthase</fullName>
        <shortName evidence="1">Holo-ACP synthase</shortName>
        <ecNumber evidence="1">2.7.8.7</ecNumber>
    </recommendedName>
    <alternativeName>
        <fullName evidence="1">4'-phosphopantetheinyl transferase AcpS</fullName>
    </alternativeName>
</protein>
<gene>
    <name evidence="1" type="primary">acpS</name>
    <name type="ordered locus">NMCC_1692</name>
</gene>
<feature type="chain" id="PRO_1000075646" description="Holo-[acyl-carrier-protein] synthase">
    <location>
        <begin position="1"/>
        <end position="125"/>
    </location>
</feature>
<feature type="binding site" evidence="1">
    <location>
        <position position="8"/>
    </location>
    <ligand>
        <name>Mg(2+)</name>
        <dbReference type="ChEBI" id="CHEBI:18420"/>
    </ligand>
</feature>
<feature type="binding site" evidence="1">
    <location>
        <position position="57"/>
    </location>
    <ligand>
        <name>Mg(2+)</name>
        <dbReference type="ChEBI" id="CHEBI:18420"/>
    </ligand>
</feature>
<name>ACPS_NEIM0</name>
<keyword id="KW-0963">Cytoplasm</keyword>
<keyword id="KW-0275">Fatty acid biosynthesis</keyword>
<keyword id="KW-0276">Fatty acid metabolism</keyword>
<keyword id="KW-0444">Lipid biosynthesis</keyword>
<keyword id="KW-0443">Lipid metabolism</keyword>
<keyword id="KW-0460">Magnesium</keyword>
<keyword id="KW-0479">Metal-binding</keyword>
<keyword id="KW-0808">Transferase</keyword>
<proteinExistence type="inferred from homology"/>